<reference key="1">
    <citation type="journal article" date="2011" name="J. Bacteriol.">
        <title>Comparative genomics of 28 Salmonella enterica isolates: evidence for CRISPR-mediated adaptive sublineage evolution.</title>
        <authorList>
            <person name="Fricke W.F."/>
            <person name="Mammel M.K."/>
            <person name="McDermott P.F."/>
            <person name="Tartera C."/>
            <person name="White D.G."/>
            <person name="Leclerc J.E."/>
            <person name="Ravel J."/>
            <person name="Cebula T.A."/>
        </authorList>
    </citation>
    <scope>NUCLEOTIDE SEQUENCE [LARGE SCALE GENOMIC DNA]</scope>
    <source>
        <strain>SL483</strain>
    </source>
</reference>
<evidence type="ECO:0000255" key="1">
    <source>
        <dbReference type="HAMAP-Rule" id="MF_00064"/>
    </source>
</evidence>
<dbReference type="EC" id="2.7.7.4" evidence="1"/>
<dbReference type="EMBL" id="CP001138">
    <property type="protein sequence ID" value="ACH49184.1"/>
    <property type="molecule type" value="Genomic_DNA"/>
</dbReference>
<dbReference type="RefSeq" id="WP_000372384.1">
    <property type="nucleotide sequence ID" value="NC_011149.1"/>
</dbReference>
<dbReference type="SMR" id="B5F416"/>
<dbReference type="KEGG" id="sea:SeAg_B3060"/>
<dbReference type="HOGENOM" id="CLU_043026_0_0_6"/>
<dbReference type="UniPathway" id="UPA00140">
    <property type="reaction ID" value="UER00204"/>
</dbReference>
<dbReference type="Proteomes" id="UP000008819">
    <property type="component" value="Chromosome"/>
</dbReference>
<dbReference type="GO" id="GO:0005524">
    <property type="term" value="F:ATP binding"/>
    <property type="evidence" value="ECO:0007669"/>
    <property type="project" value="UniProtKB-KW"/>
</dbReference>
<dbReference type="GO" id="GO:0004781">
    <property type="term" value="F:sulfate adenylyltransferase (ATP) activity"/>
    <property type="evidence" value="ECO:0007669"/>
    <property type="project" value="UniProtKB-UniRule"/>
</dbReference>
<dbReference type="GO" id="GO:0070814">
    <property type="term" value="P:hydrogen sulfide biosynthetic process"/>
    <property type="evidence" value="ECO:0007669"/>
    <property type="project" value="UniProtKB-UniRule"/>
</dbReference>
<dbReference type="GO" id="GO:0000103">
    <property type="term" value="P:sulfate assimilation"/>
    <property type="evidence" value="ECO:0007669"/>
    <property type="project" value="UniProtKB-UniRule"/>
</dbReference>
<dbReference type="CDD" id="cd23946">
    <property type="entry name" value="Sulfate_adenylyltransferase_2"/>
    <property type="match status" value="1"/>
</dbReference>
<dbReference type="FunFam" id="3.40.50.620:FF:000002">
    <property type="entry name" value="Sulfate adenylyltransferase subunit 2"/>
    <property type="match status" value="1"/>
</dbReference>
<dbReference type="Gene3D" id="3.40.50.620">
    <property type="entry name" value="HUPs"/>
    <property type="match status" value="1"/>
</dbReference>
<dbReference type="HAMAP" id="MF_00064">
    <property type="entry name" value="Sulf_adenylyltr_sub2"/>
    <property type="match status" value="1"/>
</dbReference>
<dbReference type="InterPro" id="IPR002500">
    <property type="entry name" value="PAPS_reduct_dom"/>
</dbReference>
<dbReference type="InterPro" id="IPR014729">
    <property type="entry name" value="Rossmann-like_a/b/a_fold"/>
</dbReference>
<dbReference type="InterPro" id="IPR011784">
    <property type="entry name" value="SO4_adenylTrfase_ssu"/>
</dbReference>
<dbReference type="InterPro" id="IPR050128">
    <property type="entry name" value="Sulfate_adenylyltrnsfr_sub2"/>
</dbReference>
<dbReference type="NCBIfam" id="TIGR02039">
    <property type="entry name" value="CysD"/>
    <property type="match status" value="1"/>
</dbReference>
<dbReference type="NCBIfam" id="NF003587">
    <property type="entry name" value="PRK05253.1"/>
    <property type="match status" value="1"/>
</dbReference>
<dbReference type="NCBIfam" id="NF009214">
    <property type="entry name" value="PRK12563.1"/>
    <property type="match status" value="1"/>
</dbReference>
<dbReference type="PANTHER" id="PTHR43196">
    <property type="entry name" value="SULFATE ADENYLYLTRANSFERASE SUBUNIT 2"/>
    <property type="match status" value="1"/>
</dbReference>
<dbReference type="PANTHER" id="PTHR43196:SF1">
    <property type="entry name" value="SULFATE ADENYLYLTRANSFERASE SUBUNIT 2"/>
    <property type="match status" value="1"/>
</dbReference>
<dbReference type="Pfam" id="PF01507">
    <property type="entry name" value="PAPS_reduct"/>
    <property type="match status" value="1"/>
</dbReference>
<dbReference type="PIRSF" id="PIRSF002936">
    <property type="entry name" value="CysDAde_trans"/>
    <property type="match status" value="1"/>
</dbReference>
<dbReference type="SUPFAM" id="SSF52402">
    <property type="entry name" value="Adenine nucleotide alpha hydrolases-like"/>
    <property type="match status" value="1"/>
</dbReference>
<organism>
    <name type="scientific">Salmonella agona (strain SL483)</name>
    <dbReference type="NCBI Taxonomy" id="454166"/>
    <lineage>
        <taxon>Bacteria</taxon>
        <taxon>Pseudomonadati</taxon>
        <taxon>Pseudomonadota</taxon>
        <taxon>Gammaproteobacteria</taxon>
        <taxon>Enterobacterales</taxon>
        <taxon>Enterobacteriaceae</taxon>
        <taxon>Salmonella</taxon>
    </lineage>
</organism>
<protein>
    <recommendedName>
        <fullName evidence="1">Sulfate adenylyltransferase subunit 2</fullName>
        <ecNumber evidence="1">2.7.7.4</ecNumber>
    </recommendedName>
    <alternativeName>
        <fullName evidence="1">ATP-sulfurylase small subunit</fullName>
    </alternativeName>
    <alternativeName>
        <fullName evidence="1">Sulfate adenylate transferase</fullName>
        <shortName evidence="1">SAT</shortName>
    </alternativeName>
</protein>
<accession>B5F416</accession>
<gene>
    <name evidence="1" type="primary">cysD</name>
    <name type="ordered locus">SeAg_B3060</name>
</gene>
<name>CYSD_SALA4</name>
<feature type="chain" id="PRO_1000092218" description="Sulfate adenylyltransferase subunit 2">
    <location>
        <begin position="1"/>
        <end position="302"/>
    </location>
</feature>
<proteinExistence type="inferred from homology"/>
<keyword id="KW-0067">ATP-binding</keyword>
<keyword id="KW-0547">Nucleotide-binding</keyword>
<keyword id="KW-0548">Nucleotidyltransferase</keyword>
<keyword id="KW-0808">Transferase</keyword>
<sequence>MDQKRLTHLRQLEAESIHIIREVAAEFANPVMLYSIGKDSSVMLHLARKAFYPGTLPFPLLHVDTGWKFREMYAFRDRTANAYGCELLVHKNPEGVAMGINPFVHGSAKHTDIMKTEGLKQALNKYGFDAAFGGARRDEEKSRAKERIYSFRDRFHRWDPKNQRPELWRNYNGQINKGESIRVFPLSNWTEQDIWQYIWLENIDIVPLYLAAERPVLERDGMLMMVDDDRIDLQPGEVIKKRMVRFRTLGCWPLTGAVESHAQTLPEIIEEMLVSTTSERQGRMIDRDQAGSMELKKRQGYF</sequence>
<comment type="function">
    <text evidence="1">With CysN forms the ATP sulfurylase (ATPS) that catalyzes the adenylation of sulfate producing adenosine 5'-phosphosulfate (APS) and diphosphate, the first enzymatic step in sulfur assimilation pathway. APS synthesis involves the formation of a high-energy phosphoric-sulfuric acid anhydride bond driven by GTP hydrolysis by CysN coupled to ATP hydrolysis by CysD.</text>
</comment>
<comment type="catalytic activity">
    <reaction evidence="1">
        <text>sulfate + ATP + H(+) = adenosine 5'-phosphosulfate + diphosphate</text>
        <dbReference type="Rhea" id="RHEA:18133"/>
        <dbReference type="ChEBI" id="CHEBI:15378"/>
        <dbReference type="ChEBI" id="CHEBI:16189"/>
        <dbReference type="ChEBI" id="CHEBI:30616"/>
        <dbReference type="ChEBI" id="CHEBI:33019"/>
        <dbReference type="ChEBI" id="CHEBI:58243"/>
        <dbReference type="EC" id="2.7.7.4"/>
    </reaction>
</comment>
<comment type="pathway">
    <text evidence="1">Sulfur metabolism; hydrogen sulfide biosynthesis; sulfite from sulfate: step 1/3.</text>
</comment>
<comment type="subunit">
    <text evidence="1">Heterodimer composed of CysD, the smaller subunit, and CysN.</text>
</comment>
<comment type="similarity">
    <text evidence="1">Belongs to the PAPS reductase family. CysD subfamily.</text>
</comment>